<organism>
    <name type="scientific">Sulfolobus acidocaldarius (strain ATCC 33909 / DSM 639 / JCM 8929 / NBRC 15157 / NCIMB 11770)</name>
    <dbReference type="NCBI Taxonomy" id="330779"/>
    <lineage>
        <taxon>Archaea</taxon>
        <taxon>Thermoproteota</taxon>
        <taxon>Thermoprotei</taxon>
        <taxon>Sulfolobales</taxon>
        <taxon>Sulfolobaceae</taxon>
        <taxon>Sulfolobus</taxon>
    </lineage>
</organism>
<evidence type="ECO:0000269" key="1">
    <source>
    </source>
</evidence>
<evidence type="ECO:0000269" key="2">
    <source>
    </source>
</evidence>
<evidence type="ECO:0000269" key="3">
    <source>
    </source>
</evidence>
<evidence type="ECO:0000303" key="4">
    <source>
    </source>
</evidence>
<evidence type="ECO:0000305" key="5"/>
<evidence type="ECO:0000305" key="6">
    <source>
    </source>
</evidence>
<evidence type="ECO:0000305" key="7">
    <source>
    </source>
</evidence>
<evidence type="ECO:0000312" key="8">
    <source>
        <dbReference type="EMBL" id="AAY80347.1"/>
    </source>
</evidence>
<evidence type="ECO:0007744" key="9">
    <source>
        <dbReference type="PDB" id="3ATQ"/>
    </source>
</evidence>
<evidence type="ECO:0007744" key="10">
    <source>
        <dbReference type="PDB" id="3ATR"/>
    </source>
</evidence>
<evidence type="ECO:0007744" key="11">
    <source>
        <dbReference type="PDB" id="4OPC"/>
    </source>
</evidence>
<evidence type="ECO:0007744" key="12">
    <source>
        <dbReference type="PDB" id="4OPD"/>
    </source>
</evidence>
<evidence type="ECO:0007744" key="13">
    <source>
        <dbReference type="PDB" id="4OPG"/>
    </source>
</evidence>
<evidence type="ECO:0007744" key="14">
    <source>
        <dbReference type="PDB" id="4OPI"/>
    </source>
</evidence>
<evidence type="ECO:0007744" key="15">
    <source>
        <dbReference type="PDB" id="4OPL"/>
    </source>
</evidence>
<evidence type="ECO:0007744" key="16">
    <source>
        <dbReference type="PDB" id="4OPT"/>
    </source>
</evidence>
<evidence type="ECO:0007744" key="17">
    <source>
        <dbReference type="PDB" id="4OPU"/>
    </source>
</evidence>
<evidence type="ECO:0007829" key="18">
    <source>
        <dbReference type="PDB" id="3ATR"/>
    </source>
</evidence>
<evidence type="ECO:0007829" key="19">
    <source>
        <dbReference type="PDB" id="4OPC"/>
    </source>
</evidence>
<comment type="function">
    <text evidence="1 2 3">Is involved in the reduction of 2,3-digeranylgeranylglycerophospholipids (unsaturated archaeols) into 2,3-diphytanylglycerophospholipids (saturated archaeols) in the biosynthesis of archaeal membrane lipids. Catalyzes the formation of archaetidic acid (2,3-di-O-phytanyl-sn-glyceryl phosphate) from 2,3-di-O-geranylgeranylglyceryl phosphate (DGGGP) via the hydrogenation of each double bond of the isoprenoid chains. Is not active with NADPH or NADH as an electron donor; the physiological reducing agent is unknown. Is also active on the more upstream precursors of membrane lipid biosynthesis, catalyzing the complete reduction of 3-O-geranylgeranylglyceryl phosphate (GGGP) to 3-O-phytanylglyceryl phosphate, and the partial reduction of geranylgeranyl diphosphate (GGPP) to phytyl diphosphate, thus reducing three of four GGPP double bonds and preserving the allylic double bond (at position 2). This reaction product is a reactive prenyl donor, which can be used as a substrate by archaeal prenyltransferases such as GGGP synthases.</text>
</comment>
<comment type="catalytic activity">
    <reaction evidence="6 7">
        <text>a 2,3-bis-O-phytanyl-sn-glycerol 1-phospholipid + 8 A = a 2,3-bis-O-(geranylgeranyl)-sn-glycerol 1-phospholipid + 8 AH2</text>
        <dbReference type="Rhea" id="RHEA:64376"/>
        <dbReference type="ChEBI" id="CHEBI:13193"/>
        <dbReference type="ChEBI" id="CHEBI:17499"/>
        <dbReference type="ChEBI" id="CHEBI:138139"/>
        <dbReference type="ChEBI" id="CHEBI:138140"/>
    </reaction>
    <physiologicalReaction direction="right-to-left" evidence="6">
        <dbReference type="Rhea" id="RHEA:64378"/>
    </physiologicalReaction>
</comment>
<comment type="catalytic activity">
    <reaction evidence="1">
        <text>2,3-bis-O-(phytanyl)-sn-glycerol 1-phosphate + 8 A = 2,3-bis-O-(geranylgeranyl)-sn-glycerol 1-phosphate + 8 AH2</text>
        <dbReference type="Rhea" id="RHEA:64368"/>
        <dbReference type="ChEBI" id="CHEBI:13193"/>
        <dbReference type="ChEBI" id="CHEBI:17499"/>
        <dbReference type="ChEBI" id="CHEBI:58837"/>
        <dbReference type="ChEBI" id="CHEBI:73125"/>
    </reaction>
    <physiologicalReaction direction="right-to-left" evidence="6">
        <dbReference type="Rhea" id="RHEA:64370"/>
    </physiologicalReaction>
</comment>
<comment type="catalytic activity">
    <reaction evidence="1">
        <text>sn-3-O-phytanylglycerol 1-phosphate + 4 A = sn-3-O-(geranylgeranyl)glycerol 1-phosphate + 4 AH2</text>
        <dbReference type="Rhea" id="RHEA:64388"/>
        <dbReference type="ChEBI" id="CHEBI:13193"/>
        <dbReference type="ChEBI" id="CHEBI:17499"/>
        <dbReference type="ChEBI" id="CHEBI:57677"/>
        <dbReference type="ChEBI" id="CHEBI:152569"/>
    </reaction>
    <physiologicalReaction direction="right-to-left" evidence="6">
        <dbReference type="Rhea" id="RHEA:64390"/>
    </physiologicalReaction>
</comment>
<comment type="catalytic activity">
    <reaction evidence="1 3">
        <text>phytyl diphosphate + 3 A = (2E,6E,10E)-geranylgeranyl diphosphate + 3 AH2</text>
        <dbReference type="Rhea" id="RHEA:64380"/>
        <dbReference type="ChEBI" id="CHEBI:13193"/>
        <dbReference type="ChEBI" id="CHEBI:17499"/>
        <dbReference type="ChEBI" id="CHEBI:58756"/>
        <dbReference type="ChEBI" id="CHEBI:75434"/>
    </reaction>
    <physiologicalReaction direction="right-to-left" evidence="6">
        <dbReference type="Rhea" id="RHEA:64382"/>
    </physiologicalReaction>
</comment>
<comment type="cofactor">
    <cofactor evidence="2 3 6">
        <name>FAD</name>
        <dbReference type="ChEBI" id="CHEBI:57692"/>
    </cofactor>
    <text evidence="2 3">Binds 1 FAD per subunit.</text>
</comment>
<comment type="biophysicochemical properties">
    <kinetics>
        <text evidence="3">kcat is 0.40 min(-1) for the reduction of GGPP to the hexahydro-product H(6)GGPP.</text>
    </kinetics>
    <phDependence>
        <text evidence="3">Optimum pH is 5.5 for the reduction of GGPP to the hexahydro-product H(6)GGPP.</text>
    </phDependence>
    <temperatureDependence>
        <text evidence="3">Optimum temperature is 55 degrees Celsius for the reduction of GGPP to the hexahydro-product H(6)GGPP.</text>
    </temperatureDependence>
</comment>
<comment type="pathway">
    <text evidence="6">Membrane lipid metabolism; glycerophospholipid metabolism.</text>
</comment>
<comment type="subunit">
    <text evidence="2">Monomer.</text>
</comment>
<comment type="similarity">
    <text evidence="5">Belongs to the geranylgeranyl reductase family.</text>
</comment>
<dbReference type="EC" id="1.3.-.-" evidence="1 3"/>
<dbReference type="EMBL" id="CP000077">
    <property type="protein sequence ID" value="AAY80347.1"/>
    <property type="molecule type" value="Genomic_DNA"/>
</dbReference>
<dbReference type="RefSeq" id="WP_011277849.1">
    <property type="nucleotide sequence ID" value="NC_007181.1"/>
</dbReference>
<dbReference type="PDB" id="3ATQ">
    <property type="method" value="X-ray"/>
    <property type="resolution" value="1.85 A"/>
    <property type="chains" value="A=1-452"/>
</dbReference>
<dbReference type="PDB" id="3ATR">
    <property type="method" value="X-ray"/>
    <property type="resolution" value="1.80 A"/>
    <property type="chains" value="A=1-452"/>
</dbReference>
<dbReference type="PDB" id="4OPC">
    <property type="method" value="X-ray"/>
    <property type="resolution" value="1.40 A"/>
    <property type="chains" value="A=1-452"/>
</dbReference>
<dbReference type="PDB" id="4OPD">
    <property type="method" value="X-ray"/>
    <property type="resolution" value="1.81 A"/>
    <property type="chains" value="A/B=1-452"/>
</dbReference>
<dbReference type="PDB" id="4OPG">
    <property type="method" value="X-ray"/>
    <property type="resolution" value="2.07 A"/>
    <property type="chains" value="A=1-452"/>
</dbReference>
<dbReference type="PDB" id="4OPI">
    <property type="method" value="X-ray"/>
    <property type="resolution" value="2.24 A"/>
    <property type="chains" value="A=1-452"/>
</dbReference>
<dbReference type="PDB" id="4OPL">
    <property type="method" value="X-ray"/>
    <property type="resolution" value="2.51 A"/>
    <property type="chains" value="A=1-452"/>
</dbReference>
<dbReference type="PDB" id="4OPT">
    <property type="method" value="X-ray"/>
    <property type="resolution" value="2.60 A"/>
    <property type="chains" value="A=1-452"/>
</dbReference>
<dbReference type="PDB" id="4OPU">
    <property type="method" value="X-ray"/>
    <property type="resolution" value="2.70 A"/>
    <property type="chains" value="A=1-452"/>
</dbReference>
<dbReference type="PDBsum" id="3ATQ"/>
<dbReference type="PDBsum" id="3ATR"/>
<dbReference type="PDBsum" id="4OPC"/>
<dbReference type="PDBsum" id="4OPD"/>
<dbReference type="PDBsum" id="4OPG"/>
<dbReference type="PDBsum" id="4OPI"/>
<dbReference type="PDBsum" id="4OPL"/>
<dbReference type="PDBsum" id="4OPT"/>
<dbReference type="PDBsum" id="4OPU"/>
<dbReference type="SMR" id="Q4JA33"/>
<dbReference type="STRING" id="330779.Saci_0986"/>
<dbReference type="GeneID" id="14551496"/>
<dbReference type="KEGG" id="sai:Saci_0986"/>
<dbReference type="PATRIC" id="fig|330779.12.peg.946"/>
<dbReference type="eggNOG" id="arCOG00570">
    <property type="taxonomic scope" value="Archaea"/>
</dbReference>
<dbReference type="HOGENOM" id="CLU_024648_0_0_2"/>
<dbReference type="BRENDA" id="1.3.7.11">
    <property type="organism ID" value="6160"/>
</dbReference>
<dbReference type="UniPathway" id="UPA00940"/>
<dbReference type="EvolutionaryTrace" id="Q4JA33"/>
<dbReference type="Proteomes" id="UP000001018">
    <property type="component" value="Chromosome"/>
</dbReference>
<dbReference type="GO" id="GO:0016628">
    <property type="term" value="F:oxidoreductase activity, acting on the CH-CH group of donors, NAD or NADP as acceptor"/>
    <property type="evidence" value="ECO:0007669"/>
    <property type="project" value="InterPro"/>
</dbReference>
<dbReference type="GO" id="GO:0006650">
    <property type="term" value="P:glycerophospholipid metabolic process"/>
    <property type="evidence" value="ECO:0007669"/>
    <property type="project" value="UniProtKB-UniPathway"/>
</dbReference>
<dbReference type="GO" id="GO:0008654">
    <property type="term" value="P:phospholipid biosynthetic process"/>
    <property type="evidence" value="ECO:0007669"/>
    <property type="project" value="UniProtKB-KW"/>
</dbReference>
<dbReference type="Gene3D" id="3.50.50.60">
    <property type="entry name" value="FAD/NAD(P)-binding domain"/>
    <property type="match status" value="1"/>
</dbReference>
<dbReference type="InterPro" id="IPR054906">
    <property type="entry name" value="DGGGPL_red"/>
</dbReference>
<dbReference type="InterPro" id="IPR006076">
    <property type="entry name" value="FAD-dep_OxRdtase"/>
</dbReference>
<dbReference type="InterPro" id="IPR036188">
    <property type="entry name" value="FAD/NAD-bd_sf"/>
</dbReference>
<dbReference type="InterPro" id="IPR011777">
    <property type="entry name" value="Geranylgeranyl_Rdtase_fam"/>
</dbReference>
<dbReference type="InterPro" id="IPR050407">
    <property type="entry name" value="Geranylgeranyl_reductase"/>
</dbReference>
<dbReference type="InterPro" id="IPR054715">
    <property type="entry name" value="GGR_cat"/>
</dbReference>
<dbReference type="NCBIfam" id="NF041080">
    <property type="entry name" value="DGGGPL_reductase"/>
    <property type="match status" value="1"/>
</dbReference>
<dbReference type="NCBIfam" id="TIGR02032">
    <property type="entry name" value="GG-red-SF"/>
    <property type="match status" value="1"/>
</dbReference>
<dbReference type="PANTHER" id="PTHR42685:SF18">
    <property type="entry name" value="DIGERANYLGERANYLGLYCEROPHOSPHOLIPID REDUCTASE"/>
    <property type="match status" value="1"/>
</dbReference>
<dbReference type="PANTHER" id="PTHR42685">
    <property type="entry name" value="GERANYLGERANYL DIPHOSPHATE REDUCTASE"/>
    <property type="match status" value="1"/>
</dbReference>
<dbReference type="Pfam" id="PF01266">
    <property type="entry name" value="DAO"/>
    <property type="match status" value="1"/>
</dbReference>
<dbReference type="Pfam" id="PF22578">
    <property type="entry name" value="GGR_cat"/>
    <property type="match status" value="1"/>
</dbReference>
<dbReference type="PRINTS" id="PR00420">
    <property type="entry name" value="RNGMNOXGNASE"/>
</dbReference>
<dbReference type="SUPFAM" id="SSF51905">
    <property type="entry name" value="FAD/NAD(P)-binding domain"/>
    <property type="match status" value="1"/>
</dbReference>
<feature type="chain" id="PRO_0000450802" description="Digeranylgeranylglycerophospholipid reductase">
    <location>
        <begin position="1"/>
        <end position="452"/>
    </location>
</feature>
<feature type="binding site" evidence="2 3 9 11">
    <location>
        <begin position="15"/>
        <end position="16"/>
    </location>
    <ligand>
        <name>FAD</name>
        <dbReference type="ChEBI" id="CHEBI:57692"/>
    </ligand>
</feature>
<feature type="binding site" evidence="2 3 9 11">
    <location>
        <begin position="35"/>
        <end position="36"/>
    </location>
    <ligand>
        <name>FAD</name>
        <dbReference type="ChEBI" id="CHEBI:57692"/>
    </ligand>
</feature>
<feature type="binding site" evidence="2 3 9 11">
    <location>
        <begin position="45"/>
        <end position="50"/>
    </location>
    <ligand>
        <name>FAD</name>
        <dbReference type="ChEBI" id="CHEBI:57692"/>
    </ligand>
</feature>
<feature type="binding site" evidence="7 11">
    <location>
        <position position="55"/>
    </location>
    <ligand>
        <name>a 2,3-bis-O-phytanyl-sn-glycerol 1-phospholipid</name>
        <dbReference type="ChEBI" id="CHEBI:138139"/>
    </ligand>
</feature>
<feature type="binding site" evidence="2 3 9 11">
    <location>
        <position position="122"/>
    </location>
    <ligand>
        <name>FAD</name>
        <dbReference type="ChEBI" id="CHEBI:57692"/>
    </ligand>
</feature>
<feature type="binding site" evidence="2 3 9 11">
    <location>
        <position position="288"/>
    </location>
    <ligand>
        <name>FAD</name>
        <dbReference type="ChEBI" id="CHEBI:57692"/>
    </ligand>
</feature>
<feature type="binding site" evidence="7 11">
    <location>
        <position position="297"/>
    </location>
    <ligand>
        <name>a 2,3-bis-O-phytanyl-sn-glycerol 1-phospholipid</name>
        <dbReference type="ChEBI" id="CHEBI:138139"/>
    </ligand>
</feature>
<feature type="binding site" evidence="2 3 9 11">
    <location>
        <begin position="300"/>
        <end position="301"/>
    </location>
    <ligand>
        <name>FAD</name>
        <dbReference type="ChEBI" id="CHEBI:57692"/>
    </ligand>
</feature>
<feature type="binding site" evidence="7 11">
    <location>
        <position position="340"/>
    </location>
    <ligand>
        <name>a 2,3-bis-O-phytanyl-sn-glycerol 1-phospholipid</name>
        <dbReference type="ChEBI" id="CHEBI:138139"/>
    </ligand>
</feature>
<feature type="disulfide bond" evidence="2 3 9 10 11">
    <location>
        <begin position="310"/>
        <end position="335"/>
    </location>
</feature>
<feature type="mutagenesis site" description="Almost loss of catalytic activity." evidence="2">
    <original>C</original>
    <variation>A</variation>
    <variation>M</variation>
    <location>
        <position position="47"/>
    </location>
</feature>
<feature type="mutagenesis site" description="Seems to be able to reduce only one double bond of GGGP." evidence="2">
    <original>C</original>
    <variation>S</variation>
    <location>
        <position position="47"/>
    </location>
</feature>
<feature type="mutagenesis site" description="Halts the reduction of GGPP at H(2)GGPP." evidence="3">
    <original>G</original>
    <variation>H</variation>
    <location>
        <position position="91"/>
    </location>
</feature>
<feature type="mutagenesis site" description="Increases reduction rate of GGPP to H(6)GGPP." evidence="3">
    <original>I</original>
    <variation>F</variation>
    <location>
        <position position="206"/>
    </location>
</feature>
<feature type="mutagenesis site" description="Moderate decrease in catalytic activity." evidence="2">
    <original>Y</original>
    <variation>F</variation>
    <variation>L</variation>
    <location>
        <position position="215"/>
    </location>
</feature>
<feature type="mutagenesis site" description="Large decrease in catalytic activity." evidence="2">
    <original>W</original>
    <variation>L</variation>
    <location>
        <position position="217"/>
    </location>
</feature>
<feature type="mutagenesis site" description="Halts the reduction of GGPP at H(4)GGPP." evidence="3">
    <original>F</original>
    <variation>L</variation>
    <location>
        <position position="219"/>
    </location>
</feature>
<feature type="mutagenesis site" description="Slight decrease in catalytic activity." evidence="2">
    <original>F</original>
    <variation>L</variation>
    <location>
        <position position="219"/>
    </location>
</feature>
<feature type="mutagenesis site" description="Increases reduction rate of GGPP to H(6)GGPP." evidence="3">
    <original>L</original>
    <variation>H</variation>
    <location>
        <position position="377"/>
    </location>
</feature>
<feature type="strand" evidence="19">
    <location>
        <begin position="2"/>
        <end position="5"/>
    </location>
</feature>
<feature type="strand" evidence="19">
    <location>
        <begin position="7"/>
        <end position="11"/>
    </location>
</feature>
<feature type="helix" evidence="19">
    <location>
        <begin position="15"/>
        <end position="24"/>
    </location>
</feature>
<feature type="strand" evidence="18">
    <location>
        <begin position="25"/>
        <end position="28"/>
    </location>
</feature>
<feature type="strand" evidence="19">
    <location>
        <begin position="31"/>
        <end position="34"/>
    </location>
</feature>
<feature type="helix" evidence="19">
    <location>
        <begin position="39"/>
        <end position="41"/>
    </location>
</feature>
<feature type="strand" evidence="19">
    <location>
        <begin position="50"/>
        <end position="52"/>
    </location>
</feature>
<feature type="helix" evidence="19">
    <location>
        <begin position="53"/>
        <end position="59"/>
    </location>
</feature>
<feature type="helix" evidence="19">
    <location>
        <begin position="66"/>
        <end position="68"/>
    </location>
</feature>
<feature type="strand" evidence="19">
    <location>
        <begin position="69"/>
        <end position="79"/>
    </location>
</feature>
<feature type="strand" evidence="19">
    <location>
        <begin position="86"/>
        <end position="96"/>
    </location>
</feature>
<feature type="helix" evidence="19">
    <location>
        <begin position="98"/>
        <end position="111"/>
    </location>
</feature>
<feature type="strand" evidence="19">
    <location>
        <begin position="115"/>
        <end position="128"/>
    </location>
</feature>
<feature type="strand" evidence="19">
    <location>
        <begin position="131"/>
        <end position="139"/>
    </location>
</feature>
<feature type="turn" evidence="19">
    <location>
        <begin position="140"/>
        <end position="143"/>
    </location>
</feature>
<feature type="strand" evidence="19">
    <location>
        <begin position="144"/>
        <end position="149"/>
    </location>
</feature>
<feature type="strand" evidence="19">
    <location>
        <begin position="151"/>
        <end position="155"/>
    </location>
</feature>
<feature type="helix" evidence="19">
    <location>
        <begin position="158"/>
        <end position="160"/>
    </location>
</feature>
<feature type="helix" evidence="19">
    <location>
        <begin position="164"/>
        <end position="166"/>
    </location>
</feature>
<feature type="helix" evidence="19">
    <location>
        <begin position="172"/>
        <end position="174"/>
    </location>
</feature>
<feature type="helix" evidence="19">
    <location>
        <begin position="179"/>
        <end position="181"/>
    </location>
</feature>
<feature type="strand" evidence="19">
    <location>
        <begin position="182"/>
        <end position="194"/>
    </location>
</feature>
<feature type="turn" evidence="19">
    <location>
        <begin position="197"/>
        <end position="200"/>
    </location>
</feature>
<feature type="strand" evidence="19">
    <location>
        <begin position="201"/>
        <end position="205"/>
    </location>
</feature>
<feature type="turn" evidence="19">
    <location>
        <begin position="208"/>
        <end position="210"/>
    </location>
</feature>
<feature type="strand" evidence="19">
    <location>
        <begin position="214"/>
        <end position="236"/>
    </location>
</feature>
<feature type="helix" evidence="19">
    <location>
        <begin position="241"/>
        <end position="252"/>
    </location>
</feature>
<feature type="strand" evidence="19">
    <location>
        <begin position="256"/>
        <end position="270"/>
    </location>
</feature>
<feature type="strand" evidence="19">
    <location>
        <begin position="278"/>
        <end position="280"/>
    </location>
</feature>
<feature type="strand" evidence="19">
    <location>
        <begin position="283"/>
        <end position="285"/>
    </location>
</feature>
<feature type="helix" evidence="19">
    <location>
        <begin position="287"/>
        <end position="290"/>
    </location>
</feature>
<feature type="turn" evidence="19">
    <location>
        <begin position="295"/>
        <end position="297"/>
    </location>
</feature>
<feature type="helix" evidence="19">
    <location>
        <begin position="301"/>
        <end position="321"/>
    </location>
</feature>
<feature type="helix" evidence="19">
    <location>
        <begin position="326"/>
        <end position="329"/>
    </location>
</feature>
<feature type="helix" evidence="19">
    <location>
        <begin position="331"/>
        <end position="339"/>
    </location>
</feature>
<feature type="helix" evidence="19">
    <location>
        <begin position="341"/>
        <end position="356"/>
    </location>
</feature>
<feature type="helix" evidence="19">
    <location>
        <begin position="359"/>
        <end position="367"/>
    </location>
</feature>
<feature type="helix" evidence="19">
    <location>
        <begin position="373"/>
        <end position="382"/>
    </location>
</feature>
<feature type="helix" evidence="19">
    <location>
        <begin position="387"/>
        <end position="396"/>
    </location>
</feature>
<feature type="turn" evidence="19">
    <location>
        <begin position="397"/>
        <end position="399"/>
    </location>
</feature>
<feature type="helix" evidence="19">
    <location>
        <begin position="405"/>
        <end position="408"/>
    </location>
</feature>
<feature type="helix" evidence="19">
    <location>
        <begin position="409"/>
        <end position="424"/>
    </location>
</feature>
<feature type="helix" evidence="19">
    <location>
        <begin position="430"/>
        <end position="432"/>
    </location>
</feature>
<feature type="helix" evidence="19">
    <location>
        <begin position="433"/>
        <end position="451"/>
    </location>
</feature>
<accession>Q4JA33</accession>
<name>GGR_SULAC</name>
<proteinExistence type="evidence at protein level"/>
<keyword id="KW-0002">3D-structure</keyword>
<keyword id="KW-1015">Disulfide bond</keyword>
<keyword id="KW-0274">FAD</keyword>
<keyword id="KW-0285">Flavoprotein</keyword>
<keyword id="KW-0444">Lipid biosynthesis</keyword>
<keyword id="KW-0443">Lipid metabolism</keyword>
<keyword id="KW-0560">Oxidoreductase</keyword>
<keyword id="KW-0594">Phospholipid biosynthesis</keyword>
<keyword id="KW-1208">Phospholipid metabolism</keyword>
<keyword id="KW-1185">Reference proteome</keyword>
<gene>
    <name evidence="8" type="ordered locus">Saci_0986</name>
</gene>
<sequence>MKELKYDVLIIGGGFAGSSAAYQLSRRGLKILLVDSKPWNRIGDKPCGDAVSKAHFDKLGMPYPKGEELENKINGIKLYSPDMQTVWTVNGEGFELNAPLYNQRVLKEAQDRGVEIWDLTTAMKPIFEDGYVKGAVLFNRRTNEELTVYSKVVVEATGYSRSFRSKLPPELPITEDLDDKDADVAYREVLLTKEDIEDHDYLRIFIDQETSPGGYWWYFPKGKNKVNVGLGIQGGMGYPSIHEYYKKYLDKYAPDVDKSKLLVKGGALVPTRRPLYTMAWNGIIVIGDSGFTVNPVHGGGKGSAMISGYCAAKAILSAFETGDFSASGLWDMNICYVNEYGAKQASLDIFRRFLQKLSNDDINYGMKKKIIKEEDLLEASEKGDLHLSVADKAMRVISGLGRPSLLFKLKAVAESMKKIKELYLNYPRSPSSLGSWRREVDNVLTEFNKSLS</sequence>
<protein>
    <recommendedName>
        <fullName>Digeranylgeranylglycerophospholipid reductase</fullName>
        <shortName>DGGGPL reductase</shortName>
        <ecNumber evidence="1 3">1.3.-.-</ecNumber>
    </recommendedName>
    <alternativeName>
        <fullName>2,3-bis-O-geranylgeranylglyceryl phosphate reductase</fullName>
    </alternativeName>
    <alternativeName>
        <fullName>Geranylgeranyl diphosphate reductase</fullName>
        <shortName>GGPP reductase</shortName>
    </alternativeName>
    <alternativeName>
        <fullName evidence="4">Geranylgeranyl reductase</fullName>
        <shortName evidence="4">GGR</shortName>
    </alternativeName>
</protein>
<reference key="1">
    <citation type="journal article" date="2005" name="J. Bacteriol.">
        <title>The genome of Sulfolobus acidocaldarius, a model organism of the Crenarchaeota.</title>
        <authorList>
            <person name="Chen L."/>
            <person name="Bruegger K."/>
            <person name="Skovgaard M."/>
            <person name="Redder P."/>
            <person name="She Q."/>
            <person name="Torarinsson E."/>
            <person name="Greve B."/>
            <person name="Awayez M."/>
            <person name="Zibat A."/>
            <person name="Klenk H.-P."/>
            <person name="Garrett R.A."/>
        </authorList>
    </citation>
    <scope>NUCLEOTIDE SEQUENCE [LARGE SCALE GENOMIC DNA]</scope>
    <source>
        <strain>ATCC 33909 / DSM 639 / JCM 8929 / NBRC 15157 / NCIMB 11770</strain>
    </source>
</reference>
<reference key="2">
    <citation type="journal article" date="2008" name="J. Bacteriol.">
        <title>Specific partial reduction of geranylgeranyl diphosphate by an enzyme from the thermoacidophilic archaeon Sulfolobus acidocaldarius yields a reactive prenyl donor, not a dead-end product.</title>
        <authorList>
            <person name="Sato S."/>
            <person name="Murakami M."/>
            <person name="Yoshimura T."/>
            <person name="Hemmi H."/>
        </authorList>
    </citation>
    <scope>FUNCTION</scope>
    <scope>CATALYTIC ACTIVITY</scope>
    <scope>FLAVIN-BINDING</scope>
    <scope>COFACTOR</scope>
    <scope>PATHWAY</scope>
</reference>
<reference evidence="9 10" key="3">
    <citation type="journal article" date="2011" name="J. Mol. Biol.">
        <title>Structure and mutation analysis of archaeal geranylgeranyl reductase.</title>
        <authorList>
            <person name="Sasaki D."/>
            <person name="Fujihashi M."/>
            <person name="Iwata Y."/>
            <person name="Murakami M."/>
            <person name="Yoshimura T."/>
            <person name="Hemmi H."/>
            <person name="Miki K."/>
        </authorList>
    </citation>
    <scope>X-RAY CRYSTALLOGRAPHY (1.80 ANGSTROMS) IN COMPLEX WITH FADH2</scope>
    <scope>FUNCTION</scope>
    <scope>COFACTOR</scope>
    <scope>DISULFIDE BOND</scope>
    <scope>SUBUNIT</scope>
    <scope>MUTAGENESIS OF CYS-47; TYR-215; TRP-217 AND PHE-219</scope>
</reference>
<reference evidence="11 12 13 14 15 16 17" key="4">
    <citation type="journal article" date="2014" name="Structure">
        <title>Constructing tailored isoprenoid products by structure-guided modification of geranylgeranyl reductase.</title>
        <authorList>
            <person name="Kung Y."/>
            <person name="McAndrew R.P."/>
            <person name="Xie X."/>
            <person name="Liu C.C."/>
            <person name="Pereira J.H."/>
            <person name="Adams P.D."/>
            <person name="Keasling J.D."/>
        </authorList>
    </citation>
    <scope>X-RAY CRYSTALLOGRAPHY (1.40 ANGSTROMS) OF WILD-TYPE AND MUTANTS HIS-91; PHE-206; LEU-219; HIS-377 AND PHE-206/HIS-377 IN COMPLEXES WITH FAD; GERANYLGERANYL PYROPHOSPHATE AND PHOSPHATIDYLGLYCEROL</scope>
    <scope>FUNCTION</scope>
    <scope>CATALYTIC ACTIVITY</scope>
    <scope>BIOPHYSICOCHEMICAL PROPERTIES</scope>
    <scope>COFACTOR</scope>
    <scope>DISULFIDE BOND</scope>
    <scope>MUTAGENESIS OF GLY-91; ILE-206; PHE-219 AND LEU-377</scope>
    <scope>REACTION MECHANISM</scope>
</reference>